<evidence type="ECO:0000255" key="1">
    <source>
        <dbReference type="PROSITE-ProRule" id="PRU00453"/>
    </source>
</evidence>
<evidence type="ECO:0000256" key="2">
    <source>
        <dbReference type="SAM" id="MobiDB-lite"/>
    </source>
</evidence>
<evidence type="ECO:0000269" key="3">
    <source>
    </source>
</evidence>
<evidence type="ECO:0000269" key="4">
    <source>
    </source>
</evidence>
<evidence type="ECO:0000269" key="5">
    <source>
    </source>
</evidence>
<evidence type="ECO:0000303" key="6">
    <source>
    </source>
</evidence>
<evidence type="ECO:0000305" key="7"/>
<evidence type="ECO:0007744" key="8">
    <source>
    </source>
</evidence>
<evidence type="ECO:0007744" key="9">
    <source>
    </source>
</evidence>
<evidence type="ECO:0007744" key="10">
    <source>
    </source>
</evidence>
<evidence type="ECO:0007744" key="11">
    <source>
    </source>
</evidence>
<evidence type="ECO:0007744" key="12">
    <source>
    </source>
</evidence>
<evidence type="ECO:0007744" key="13">
    <source>
    </source>
</evidence>
<sequence length="470" mass="53918">MEFAAENEGKSGGGLHSVAEGVRLSPEPGREGVRDLAGAEEFGGGEEGTGLTGIKEIGDGEEGSGQRPEEIPMDLTVVKQEIIDWPGTEGRLAGQWVEQEVEDRPEVKDENAGVLEVKQETDSSLVVKEAKVGEPEVKEEKVKEEVMDWSEVKEEKDNLEIKQEEKFVGQCIKEELMHGECVKEEKDFLKKEIVDDTKVKEEPPINHPVGCKRKLAMSRCETCGTEEAKYRCPRCMRYSCSLPCVKKHKAELTCNGVRDKTAYISIQQFTEMNLLSDYRFLEDVARTADHISRDAFLKRPISNKYMYFMKNRARRQGINLKLLPNGFTKRKENSTFFDKKKQQFCWHVKLQFPQSQAEYIEKRVPDDKTINEILKPYIDPEKSDPVIRQRLKAYIRSQTGVQILMKIEYMQQNLVRYYELDPYKSLLDNLRNKVIIEYPTLHVVLKGSNNDMKVLHQVKSESTKNVGNEN</sequence>
<name>BCD1_HUMAN</name>
<feature type="chain" id="PRO_0000280239" description="Box C/D snoRNA protein 1">
    <location>
        <begin position="1"/>
        <end position="470"/>
    </location>
</feature>
<feature type="zinc finger region" description="HIT-type" evidence="1">
    <location>
        <begin position="220"/>
        <end position="254"/>
    </location>
</feature>
<feature type="region of interest" description="Disordered" evidence="2">
    <location>
        <begin position="1"/>
        <end position="70"/>
    </location>
</feature>
<feature type="compositionally biased region" description="Gly residues" evidence="2">
    <location>
        <begin position="41"/>
        <end position="51"/>
    </location>
</feature>
<feature type="binding site" evidence="1">
    <location>
        <position position="220"/>
    </location>
    <ligand>
        <name>Zn(2+)</name>
        <dbReference type="ChEBI" id="CHEBI:29105"/>
        <label>1</label>
    </ligand>
</feature>
<feature type="binding site" evidence="1">
    <location>
        <position position="223"/>
    </location>
    <ligand>
        <name>Zn(2+)</name>
        <dbReference type="ChEBI" id="CHEBI:29105"/>
        <label>1</label>
    </ligand>
</feature>
<feature type="binding site" evidence="1">
    <location>
        <position position="232"/>
    </location>
    <ligand>
        <name>Zn(2+)</name>
        <dbReference type="ChEBI" id="CHEBI:29105"/>
        <label>2</label>
    </ligand>
</feature>
<feature type="binding site" evidence="1">
    <location>
        <position position="235"/>
    </location>
    <ligand>
        <name>Zn(2+)</name>
        <dbReference type="ChEBI" id="CHEBI:29105"/>
        <label>2</label>
    </ligand>
</feature>
<feature type="binding site" evidence="1">
    <location>
        <position position="240"/>
    </location>
    <ligand>
        <name>Zn(2+)</name>
        <dbReference type="ChEBI" id="CHEBI:29105"/>
        <label>1</label>
    </ligand>
</feature>
<feature type="binding site" evidence="1">
    <location>
        <position position="244"/>
    </location>
    <ligand>
        <name>Zn(2+)</name>
        <dbReference type="ChEBI" id="CHEBI:29105"/>
        <label>1</label>
    </ligand>
</feature>
<feature type="binding site" evidence="1">
    <location>
        <position position="248"/>
    </location>
    <ligand>
        <name>Zn(2+)</name>
        <dbReference type="ChEBI" id="CHEBI:29105"/>
        <label>2</label>
    </ligand>
</feature>
<feature type="binding site" evidence="1">
    <location>
        <position position="254"/>
    </location>
    <ligand>
        <name>Zn(2+)</name>
        <dbReference type="ChEBI" id="CHEBI:29105"/>
        <label>2</label>
    </ligand>
</feature>
<feature type="modified residue" description="Phosphoserine" evidence="8 9 10">
    <location>
        <position position="25"/>
    </location>
</feature>
<feature type="cross-link" description="Glycyl lysine isopeptide (Lys-Gly) (interchain with G-Cter in SUMO2)" evidence="13">
    <location>
        <position position="79"/>
    </location>
</feature>
<feature type="cross-link" description="Glycyl lysine isopeptide (Lys-Gly) (interchain with G-Cter in SUMO2)" evidence="13">
    <location>
        <position position="108"/>
    </location>
</feature>
<feature type="cross-link" description="Glycyl lysine isopeptide (Lys-Gly) (interchain with G-Cter in SUMO2)" evidence="13">
    <location>
        <position position="118"/>
    </location>
</feature>
<feature type="cross-link" description="Glycyl lysine isopeptide (Lys-Gly) (interchain with G-Cter in SUMO2)" evidence="12 13">
    <location>
        <position position="138"/>
    </location>
</feature>
<feature type="cross-link" description="Glycyl lysine isopeptide (Lys-Gly) (interchain with G-Cter in SUMO2)" evidence="11 13">
    <location>
        <position position="143"/>
    </location>
</feature>
<feature type="cross-link" description="Glycyl lysine isopeptide (Lys-Gly) (interchain with G-Cter in SUMO2)" evidence="13">
    <location>
        <position position="153"/>
    </location>
</feature>
<feature type="cross-link" description="Glycyl lysine isopeptide (Lys-Gly) (interchain with G-Cter in SUMO2)" evidence="11 13">
    <location>
        <position position="162"/>
    </location>
</feature>
<feature type="cross-link" description="Glycyl lysine isopeptide (Lys-Gly) (interchain with G-Cter in SUMO2)" evidence="13">
    <location>
        <position position="173"/>
    </location>
</feature>
<feature type="cross-link" description="Glycyl lysine isopeptide (Lys-Gly) (interchain with G-Cter in SUMO2)" evidence="13">
    <location>
        <position position="183"/>
    </location>
</feature>
<feature type="cross-link" description="Glycyl lysine isopeptide (Lys-Gly) (interchain with G-Cter in SUMO2)" evidence="11 12 13">
    <location>
        <position position="200"/>
    </location>
</feature>
<feature type="cross-link" description="Glycyl lysine isopeptide (Lys-Gly) (interchain with G-Cter in SUMO2)" evidence="11 13">
    <location>
        <position position="459"/>
    </location>
</feature>
<feature type="splice variant" id="VSP_042946" description="In isoform 2." evidence="6">
    <location>
        <begin position="78"/>
        <end position="116"/>
    </location>
</feature>
<feature type="sequence variant" id="VAR_031096" description="In dbSNP:rs17399721.">
    <original>G</original>
    <variation>R</variation>
    <location>
        <position position="9"/>
    </location>
</feature>
<feature type="sequence variant" id="VAR_035721" description="In a colorectal cancer sample; somatic mutation." evidence="3">
    <original>L</original>
    <variation>H</variation>
    <location>
        <position position="455"/>
    </location>
</feature>
<feature type="sequence conflict" description="In Ref. 2; CAC09440." evidence="7" ref="2">
    <original>E</original>
    <variation>G</variation>
    <location>
        <position position="144"/>
    </location>
</feature>
<keyword id="KW-0025">Alternative splicing</keyword>
<keyword id="KW-1017">Isopeptide bond</keyword>
<keyword id="KW-0479">Metal-binding</keyword>
<keyword id="KW-0597">Phosphoprotein</keyword>
<keyword id="KW-1267">Proteomics identification</keyword>
<keyword id="KW-1185">Reference proteome</keyword>
<keyword id="KW-0690">Ribosome biogenesis</keyword>
<keyword id="KW-0832">Ubl conjugation</keyword>
<keyword id="KW-0862">Zinc</keyword>
<keyword id="KW-0863">Zinc-finger</keyword>
<proteinExistence type="evidence at protein level"/>
<organism>
    <name type="scientific">Homo sapiens</name>
    <name type="common">Human</name>
    <dbReference type="NCBI Taxonomy" id="9606"/>
    <lineage>
        <taxon>Eukaryota</taxon>
        <taxon>Metazoa</taxon>
        <taxon>Chordata</taxon>
        <taxon>Craniata</taxon>
        <taxon>Vertebrata</taxon>
        <taxon>Euteleostomi</taxon>
        <taxon>Mammalia</taxon>
        <taxon>Eutheria</taxon>
        <taxon>Euarchontoglires</taxon>
        <taxon>Primates</taxon>
        <taxon>Haplorrhini</taxon>
        <taxon>Catarrhini</taxon>
        <taxon>Hominidae</taxon>
        <taxon>Homo</taxon>
    </lineage>
</organism>
<protein>
    <recommendedName>
        <fullName>Box C/D snoRNA protein 1</fullName>
    </recommendedName>
    <alternativeName>
        <fullName>Serologically defined breast cancer antigen NY-BR-75</fullName>
    </alternativeName>
    <alternativeName>
        <fullName>Zinc finger HIT domain-containing protein 6</fullName>
    </alternativeName>
</protein>
<accession>Q9NWK9</accession>
<accession>B2RBA1</accession>
<accession>B4DP13</accession>
<accession>D3DT20</accession>
<accession>Q9H278</accession>
<accession>Q9H3X3</accession>
<accession>Q9NWN0</accession>
<dbReference type="EMBL" id="AK000736">
    <property type="protein sequence ID" value="BAA91349.1"/>
    <property type="status" value="ALT_INIT"/>
    <property type="molecule type" value="mRNA"/>
</dbReference>
<dbReference type="EMBL" id="AK000767">
    <property type="protein sequence ID" value="BAA91371.1"/>
    <property type="molecule type" value="mRNA"/>
</dbReference>
<dbReference type="EMBL" id="AK298149">
    <property type="protein sequence ID" value="BAG60425.1"/>
    <property type="molecule type" value="mRNA"/>
</dbReference>
<dbReference type="EMBL" id="AK314566">
    <property type="protein sequence ID" value="BAG37148.1"/>
    <property type="molecule type" value="mRNA"/>
</dbReference>
<dbReference type="EMBL" id="AL442074">
    <property type="protein sequence ID" value="CAC09440.1"/>
    <property type="molecule type" value="mRNA"/>
</dbReference>
<dbReference type="EMBL" id="AC092807">
    <property type="status" value="NOT_ANNOTATED_CDS"/>
    <property type="molecule type" value="Genomic_DNA"/>
</dbReference>
<dbReference type="EMBL" id="AC099561">
    <property type="status" value="NOT_ANNOTATED_CDS"/>
    <property type="molecule type" value="Genomic_DNA"/>
</dbReference>
<dbReference type="EMBL" id="BX323040">
    <property type="status" value="NOT_ANNOTATED_CDS"/>
    <property type="molecule type" value="Genomic_DNA"/>
</dbReference>
<dbReference type="EMBL" id="CH471097">
    <property type="protein sequence ID" value="EAW73194.1"/>
    <property type="molecule type" value="Genomic_DNA"/>
</dbReference>
<dbReference type="EMBL" id="CH471097">
    <property type="protein sequence ID" value="EAW73195.1"/>
    <property type="molecule type" value="Genomic_DNA"/>
</dbReference>
<dbReference type="EMBL" id="BC026236">
    <property type="protein sequence ID" value="AAH26236.1"/>
    <property type="molecule type" value="mRNA"/>
</dbReference>
<dbReference type="EMBL" id="BC110898">
    <property type="protein sequence ID" value="AAI10899.1"/>
    <property type="molecule type" value="mRNA"/>
</dbReference>
<dbReference type="EMBL" id="AF308296">
    <property type="protein sequence ID" value="AAG48263.1"/>
    <property type="status" value="ALT_FRAME"/>
    <property type="molecule type" value="mRNA"/>
</dbReference>
<dbReference type="CCDS" id="CCDS53338.1">
    <molecule id="Q9NWK9-2"/>
</dbReference>
<dbReference type="CCDS" id="CCDS707.1">
    <molecule id="Q9NWK9-1"/>
</dbReference>
<dbReference type="RefSeq" id="NP_001164141.1">
    <molecule id="Q9NWK9-2"/>
    <property type="nucleotide sequence ID" value="NM_001170670.2"/>
</dbReference>
<dbReference type="RefSeq" id="NP_060423.3">
    <molecule id="Q9NWK9-1"/>
    <property type="nucleotide sequence ID" value="NM_017953.3"/>
</dbReference>
<dbReference type="SMR" id="Q9NWK9"/>
<dbReference type="BioGRID" id="120099">
    <property type="interactions" value="96"/>
</dbReference>
<dbReference type="CORUM" id="Q9NWK9"/>
<dbReference type="FunCoup" id="Q9NWK9">
    <property type="interactions" value="1693"/>
</dbReference>
<dbReference type="IntAct" id="Q9NWK9">
    <property type="interactions" value="52"/>
</dbReference>
<dbReference type="MINT" id="Q9NWK9"/>
<dbReference type="STRING" id="9606.ENSP00000359606"/>
<dbReference type="GlyCosmos" id="Q9NWK9">
    <property type="glycosylation" value="1 site, 1 glycan"/>
</dbReference>
<dbReference type="GlyGen" id="Q9NWK9">
    <property type="glycosylation" value="1 site, 1 N-linked glycan (1 site)"/>
</dbReference>
<dbReference type="iPTMnet" id="Q9NWK9"/>
<dbReference type="PhosphoSitePlus" id="Q9NWK9"/>
<dbReference type="BioMuta" id="ZNHIT6"/>
<dbReference type="DMDM" id="74753026"/>
<dbReference type="jPOST" id="Q9NWK9"/>
<dbReference type="MassIVE" id="Q9NWK9"/>
<dbReference type="PaxDb" id="9606-ENSP00000359606"/>
<dbReference type="PeptideAtlas" id="Q9NWK9"/>
<dbReference type="ProteomicsDB" id="82943">
    <molecule id="Q9NWK9-1"/>
</dbReference>
<dbReference type="ProteomicsDB" id="82944">
    <molecule id="Q9NWK9-2"/>
</dbReference>
<dbReference type="Pumba" id="Q9NWK9"/>
<dbReference type="Antibodypedia" id="19797">
    <property type="antibodies" value="115 antibodies from 22 providers"/>
</dbReference>
<dbReference type="DNASU" id="54680"/>
<dbReference type="Ensembl" id="ENST00000370574.4">
    <molecule id="Q9NWK9-1"/>
    <property type="protein sequence ID" value="ENSP00000359606.3"/>
    <property type="gene ID" value="ENSG00000117174.11"/>
</dbReference>
<dbReference type="Ensembl" id="ENST00000431532.6">
    <molecule id="Q9NWK9-2"/>
    <property type="protein sequence ID" value="ENSP00000414344.2"/>
    <property type="gene ID" value="ENSG00000117174.11"/>
</dbReference>
<dbReference type="GeneID" id="54680"/>
<dbReference type="KEGG" id="hsa:54680"/>
<dbReference type="MANE-Select" id="ENST00000370574.4">
    <property type="protein sequence ID" value="ENSP00000359606.3"/>
    <property type="RefSeq nucleotide sequence ID" value="NM_017953.4"/>
    <property type="RefSeq protein sequence ID" value="NP_060423.3"/>
</dbReference>
<dbReference type="UCSC" id="uc001dlh.4">
    <molecule id="Q9NWK9-1"/>
    <property type="organism name" value="human"/>
</dbReference>
<dbReference type="AGR" id="HGNC:26089"/>
<dbReference type="CTD" id="54680"/>
<dbReference type="DisGeNET" id="54680"/>
<dbReference type="GeneCards" id="ZNHIT6"/>
<dbReference type="HGNC" id="HGNC:26089">
    <property type="gene designation" value="ZNHIT6"/>
</dbReference>
<dbReference type="HPA" id="ENSG00000117174">
    <property type="expression patterns" value="Low tissue specificity"/>
</dbReference>
<dbReference type="MIM" id="620473">
    <property type="type" value="gene"/>
</dbReference>
<dbReference type="neXtProt" id="NX_Q9NWK9"/>
<dbReference type="OpenTargets" id="ENSG00000117174"/>
<dbReference type="PharmGKB" id="PA162410929"/>
<dbReference type="VEuPathDB" id="HostDB:ENSG00000117174"/>
<dbReference type="eggNOG" id="KOG2858">
    <property type="taxonomic scope" value="Eukaryota"/>
</dbReference>
<dbReference type="GeneTree" id="ENSGT00390000017201"/>
<dbReference type="HOGENOM" id="CLU_583884_0_0_1"/>
<dbReference type="InParanoid" id="Q9NWK9"/>
<dbReference type="OMA" id="CWHVKLL"/>
<dbReference type="OrthoDB" id="272357at2759"/>
<dbReference type="PAN-GO" id="Q9NWK9">
    <property type="GO annotations" value="5 GO annotations based on evolutionary models"/>
</dbReference>
<dbReference type="PhylomeDB" id="Q9NWK9"/>
<dbReference type="TreeFam" id="TF323923"/>
<dbReference type="PathwayCommons" id="Q9NWK9"/>
<dbReference type="SignaLink" id="Q9NWK9"/>
<dbReference type="BioGRID-ORCS" id="54680">
    <property type="hits" value="515 hits in 1167 CRISPR screens"/>
</dbReference>
<dbReference type="ChiTaRS" id="ZNHIT6">
    <property type="organism name" value="human"/>
</dbReference>
<dbReference type="GenomeRNAi" id="54680"/>
<dbReference type="Pharos" id="Q9NWK9">
    <property type="development level" value="Tbio"/>
</dbReference>
<dbReference type="PRO" id="PR:Q9NWK9"/>
<dbReference type="Proteomes" id="UP000005640">
    <property type="component" value="Chromosome 1"/>
</dbReference>
<dbReference type="RNAct" id="Q9NWK9">
    <property type="molecule type" value="protein"/>
</dbReference>
<dbReference type="Bgee" id="ENSG00000117174">
    <property type="expression patterns" value="Expressed in tibia and 208 other cell types or tissues"/>
</dbReference>
<dbReference type="GO" id="GO:0070062">
    <property type="term" value="C:extracellular exosome"/>
    <property type="evidence" value="ECO:0007005"/>
    <property type="project" value="UniProtKB"/>
</dbReference>
<dbReference type="GO" id="GO:0005634">
    <property type="term" value="C:nucleus"/>
    <property type="evidence" value="ECO:0000318"/>
    <property type="project" value="GO_Central"/>
</dbReference>
<dbReference type="GO" id="GO:0070761">
    <property type="term" value="C:pre-snoRNP complex"/>
    <property type="evidence" value="ECO:0000314"/>
    <property type="project" value="BHF-UCL"/>
</dbReference>
<dbReference type="GO" id="GO:0051117">
    <property type="term" value="F:ATPase binding"/>
    <property type="evidence" value="ECO:0000353"/>
    <property type="project" value="UniProtKB"/>
</dbReference>
<dbReference type="GO" id="GO:0019899">
    <property type="term" value="F:enzyme binding"/>
    <property type="evidence" value="ECO:0000353"/>
    <property type="project" value="UniProtKB"/>
</dbReference>
<dbReference type="GO" id="GO:0042802">
    <property type="term" value="F:identical protein binding"/>
    <property type="evidence" value="ECO:0000353"/>
    <property type="project" value="BHF-UCL"/>
</dbReference>
<dbReference type="GO" id="GO:0001094">
    <property type="term" value="F:TFIID-class transcription factor complex binding"/>
    <property type="evidence" value="ECO:0000353"/>
    <property type="project" value="UniProtKB"/>
</dbReference>
<dbReference type="GO" id="GO:0008270">
    <property type="term" value="F:zinc ion binding"/>
    <property type="evidence" value="ECO:0007669"/>
    <property type="project" value="UniProtKB-KW"/>
</dbReference>
<dbReference type="GO" id="GO:0000492">
    <property type="term" value="P:box C/D snoRNP assembly"/>
    <property type="evidence" value="ECO:0000315"/>
    <property type="project" value="BHF-UCL"/>
</dbReference>
<dbReference type="GO" id="GO:0000463">
    <property type="term" value="P:maturation of LSU-rRNA from tricistronic rRNA transcript (SSU-rRNA, 5.8S rRNA, LSU-rRNA)"/>
    <property type="evidence" value="ECO:0000318"/>
    <property type="project" value="GO_Central"/>
</dbReference>
<dbReference type="GO" id="GO:0051259">
    <property type="term" value="P:protein complex oligomerization"/>
    <property type="evidence" value="ECO:0000315"/>
    <property type="project" value="UniProtKB"/>
</dbReference>
<dbReference type="GO" id="GO:0048254">
    <property type="term" value="P:snoRNA localization"/>
    <property type="evidence" value="ECO:0000315"/>
    <property type="project" value="UniProtKB"/>
</dbReference>
<dbReference type="CDD" id="cd23023">
    <property type="entry name" value="zf-HIT_BCD1"/>
    <property type="match status" value="1"/>
</dbReference>
<dbReference type="FunFam" id="3.30.60.190:FF:000001">
    <property type="entry name" value="box C/D snoRNA protein 1"/>
    <property type="match status" value="1"/>
</dbReference>
<dbReference type="Gene3D" id="3.30.60.190">
    <property type="match status" value="1"/>
</dbReference>
<dbReference type="InterPro" id="IPR051639">
    <property type="entry name" value="BCD1"/>
</dbReference>
<dbReference type="InterPro" id="IPR007529">
    <property type="entry name" value="Znf_HIT"/>
</dbReference>
<dbReference type="PANTHER" id="PTHR13483:SF3">
    <property type="entry name" value="BOX C_D SNORNA PROTEIN 1"/>
    <property type="match status" value="1"/>
</dbReference>
<dbReference type="PANTHER" id="PTHR13483">
    <property type="entry name" value="BOX C_D SNORNA PROTEIN 1-RELATED"/>
    <property type="match status" value="1"/>
</dbReference>
<dbReference type="Pfam" id="PF04438">
    <property type="entry name" value="zf-HIT"/>
    <property type="match status" value="1"/>
</dbReference>
<dbReference type="SUPFAM" id="SSF144232">
    <property type="entry name" value="HIT/MYND zinc finger-like"/>
    <property type="match status" value="1"/>
</dbReference>
<dbReference type="PROSITE" id="PS51083">
    <property type="entry name" value="ZF_HIT"/>
    <property type="match status" value="1"/>
</dbReference>
<comment type="function">
    <text evidence="4">Required for box C/D snoRNAs accumulation involved in snoRNA processing, snoRNA transport to the nucleolus and ribosome biogenesis.</text>
</comment>
<comment type="subunit">
    <text evidence="4 5">Interacts with FBL, SNU13, NOP58, NUFIP1, RUVBL1, RUVBL2 and TAF9 (PubMed:17636026). Interacts (via HIT-type zinc finger) with the RUVBL1/RUVBL2 complex in the presence of ADP (PubMed:28561026).</text>
</comment>
<comment type="interaction">
    <interactant intactId="EBI-2563515">
        <id>Q9NWK9</id>
    </interactant>
    <interactant intactId="EBI-2563549">
        <id>Q9UHK0</id>
        <label>NUFIP1</label>
    </interactant>
    <organismsDiffer>false</organismsDiffer>
    <experiments>3</experiments>
</comment>
<comment type="alternative products">
    <event type="alternative splicing"/>
    <isoform>
        <id>Q9NWK9-1</id>
        <name>1</name>
        <sequence type="displayed"/>
    </isoform>
    <isoform>
        <id>Q9NWK9-2</id>
        <name>2</name>
        <sequence type="described" ref="VSP_042946"/>
    </isoform>
</comment>
<comment type="similarity">
    <text evidence="7">Belongs to the BCD1 family.</text>
</comment>
<comment type="sequence caution" evidence="7">
    <conflict type="frameshift">
        <sequence resource="EMBL-CDS" id="AAG48263"/>
    </conflict>
</comment>
<comment type="sequence caution" evidence="7">
    <conflict type="erroneous initiation">
        <sequence resource="EMBL-CDS" id="BAA91349"/>
    </conflict>
</comment>
<reference key="1">
    <citation type="journal article" date="2004" name="Nat. Genet.">
        <title>Complete sequencing and characterization of 21,243 full-length human cDNAs.</title>
        <authorList>
            <person name="Ota T."/>
            <person name="Suzuki Y."/>
            <person name="Nishikawa T."/>
            <person name="Otsuki T."/>
            <person name="Sugiyama T."/>
            <person name="Irie R."/>
            <person name="Wakamatsu A."/>
            <person name="Hayashi K."/>
            <person name="Sato H."/>
            <person name="Nagai K."/>
            <person name="Kimura K."/>
            <person name="Makita H."/>
            <person name="Sekine M."/>
            <person name="Obayashi M."/>
            <person name="Nishi T."/>
            <person name="Shibahara T."/>
            <person name="Tanaka T."/>
            <person name="Ishii S."/>
            <person name="Yamamoto J."/>
            <person name="Saito K."/>
            <person name="Kawai Y."/>
            <person name="Isono Y."/>
            <person name="Nakamura Y."/>
            <person name="Nagahari K."/>
            <person name="Murakami K."/>
            <person name="Yasuda T."/>
            <person name="Iwayanagi T."/>
            <person name="Wagatsuma M."/>
            <person name="Shiratori A."/>
            <person name="Sudo H."/>
            <person name="Hosoiri T."/>
            <person name="Kaku Y."/>
            <person name="Kodaira H."/>
            <person name="Kondo H."/>
            <person name="Sugawara M."/>
            <person name="Takahashi M."/>
            <person name="Kanda K."/>
            <person name="Yokoi T."/>
            <person name="Furuya T."/>
            <person name="Kikkawa E."/>
            <person name="Omura Y."/>
            <person name="Abe K."/>
            <person name="Kamihara K."/>
            <person name="Katsuta N."/>
            <person name="Sato K."/>
            <person name="Tanikawa M."/>
            <person name="Yamazaki M."/>
            <person name="Ninomiya K."/>
            <person name="Ishibashi T."/>
            <person name="Yamashita H."/>
            <person name="Murakawa K."/>
            <person name="Fujimori K."/>
            <person name="Tanai H."/>
            <person name="Kimata M."/>
            <person name="Watanabe M."/>
            <person name="Hiraoka S."/>
            <person name="Chiba Y."/>
            <person name="Ishida S."/>
            <person name="Ono Y."/>
            <person name="Takiguchi S."/>
            <person name="Watanabe S."/>
            <person name="Yosida M."/>
            <person name="Hotuta T."/>
            <person name="Kusano J."/>
            <person name="Kanehori K."/>
            <person name="Takahashi-Fujii A."/>
            <person name="Hara H."/>
            <person name="Tanase T.-O."/>
            <person name="Nomura Y."/>
            <person name="Togiya S."/>
            <person name="Komai F."/>
            <person name="Hara R."/>
            <person name="Takeuchi K."/>
            <person name="Arita M."/>
            <person name="Imose N."/>
            <person name="Musashino K."/>
            <person name="Yuuki H."/>
            <person name="Oshima A."/>
            <person name="Sasaki N."/>
            <person name="Aotsuka S."/>
            <person name="Yoshikawa Y."/>
            <person name="Matsunawa H."/>
            <person name="Ichihara T."/>
            <person name="Shiohata N."/>
            <person name="Sano S."/>
            <person name="Moriya S."/>
            <person name="Momiyama H."/>
            <person name="Satoh N."/>
            <person name="Takami S."/>
            <person name="Terashima Y."/>
            <person name="Suzuki O."/>
            <person name="Nakagawa S."/>
            <person name="Senoh A."/>
            <person name="Mizoguchi H."/>
            <person name="Goto Y."/>
            <person name="Shimizu F."/>
            <person name="Wakebe H."/>
            <person name="Hishigaki H."/>
            <person name="Watanabe T."/>
            <person name="Sugiyama A."/>
            <person name="Takemoto M."/>
            <person name="Kawakami B."/>
            <person name="Yamazaki M."/>
            <person name="Watanabe K."/>
            <person name="Kumagai A."/>
            <person name="Itakura S."/>
            <person name="Fukuzumi Y."/>
            <person name="Fujimori Y."/>
            <person name="Komiyama M."/>
            <person name="Tashiro H."/>
            <person name="Tanigami A."/>
            <person name="Fujiwara T."/>
            <person name="Ono T."/>
            <person name="Yamada K."/>
            <person name="Fujii Y."/>
            <person name="Ozaki K."/>
            <person name="Hirao M."/>
            <person name="Ohmori Y."/>
            <person name="Kawabata A."/>
            <person name="Hikiji T."/>
            <person name="Kobatake N."/>
            <person name="Inagaki H."/>
            <person name="Ikema Y."/>
            <person name="Okamoto S."/>
            <person name="Okitani R."/>
            <person name="Kawakami T."/>
            <person name="Noguchi S."/>
            <person name="Itoh T."/>
            <person name="Shigeta K."/>
            <person name="Senba T."/>
            <person name="Matsumura K."/>
            <person name="Nakajima Y."/>
            <person name="Mizuno T."/>
            <person name="Morinaga M."/>
            <person name="Sasaki M."/>
            <person name="Togashi T."/>
            <person name="Oyama M."/>
            <person name="Hata H."/>
            <person name="Watanabe M."/>
            <person name="Komatsu T."/>
            <person name="Mizushima-Sugano J."/>
            <person name="Satoh T."/>
            <person name="Shirai Y."/>
            <person name="Takahashi Y."/>
            <person name="Nakagawa K."/>
            <person name="Okumura K."/>
            <person name="Nagase T."/>
            <person name="Nomura N."/>
            <person name="Kikuchi H."/>
            <person name="Masuho Y."/>
            <person name="Yamashita R."/>
            <person name="Nakai K."/>
            <person name="Yada T."/>
            <person name="Nakamura Y."/>
            <person name="Ohara O."/>
            <person name="Isogai T."/>
            <person name="Sugano S."/>
        </authorList>
    </citation>
    <scope>NUCLEOTIDE SEQUENCE [LARGE SCALE MRNA] (ISOFORMS 1 AND 2)</scope>
    <source>
        <tissue>Hepatoma</tissue>
        <tissue>Testis</tissue>
    </source>
</reference>
<reference key="2">
    <citation type="journal article" date="2007" name="BMC Genomics">
        <title>The full-ORF clone resource of the German cDNA consortium.</title>
        <authorList>
            <person name="Bechtel S."/>
            <person name="Rosenfelder H."/>
            <person name="Duda A."/>
            <person name="Schmidt C.P."/>
            <person name="Ernst U."/>
            <person name="Wellenreuther R."/>
            <person name="Mehrle A."/>
            <person name="Schuster C."/>
            <person name="Bahr A."/>
            <person name="Bloecker H."/>
            <person name="Heubner D."/>
            <person name="Hoerlein A."/>
            <person name="Michel G."/>
            <person name="Wedler H."/>
            <person name="Koehrer K."/>
            <person name="Ottenwaelder B."/>
            <person name="Poustka A."/>
            <person name="Wiemann S."/>
            <person name="Schupp I."/>
        </authorList>
    </citation>
    <scope>NUCLEOTIDE SEQUENCE [LARGE SCALE MRNA] (ISOFORM 1)</scope>
    <source>
        <tissue>Testis</tissue>
    </source>
</reference>
<reference key="3">
    <citation type="journal article" date="2006" name="Nature">
        <title>The DNA sequence and biological annotation of human chromosome 1.</title>
        <authorList>
            <person name="Gregory S.G."/>
            <person name="Barlow K.F."/>
            <person name="McLay K.E."/>
            <person name="Kaul R."/>
            <person name="Swarbreck D."/>
            <person name="Dunham A."/>
            <person name="Scott C.E."/>
            <person name="Howe K.L."/>
            <person name="Woodfine K."/>
            <person name="Spencer C.C.A."/>
            <person name="Jones M.C."/>
            <person name="Gillson C."/>
            <person name="Searle S."/>
            <person name="Zhou Y."/>
            <person name="Kokocinski F."/>
            <person name="McDonald L."/>
            <person name="Evans R."/>
            <person name="Phillips K."/>
            <person name="Atkinson A."/>
            <person name="Cooper R."/>
            <person name="Jones C."/>
            <person name="Hall R.E."/>
            <person name="Andrews T.D."/>
            <person name="Lloyd C."/>
            <person name="Ainscough R."/>
            <person name="Almeida J.P."/>
            <person name="Ambrose K.D."/>
            <person name="Anderson F."/>
            <person name="Andrew R.W."/>
            <person name="Ashwell R.I.S."/>
            <person name="Aubin K."/>
            <person name="Babbage A.K."/>
            <person name="Bagguley C.L."/>
            <person name="Bailey J."/>
            <person name="Beasley H."/>
            <person name="Bethel G."/>
            <person name="Bird C.P."/>
            <person name="Bray-Allen S."/>
            <person name="Brown J.Y."/>
            <person name="Brown A.J."/>
            <person name="Buckley D."/>
            <person name="Burton J."/>
            <person name="Bye J."/>
            <person name="Carder C."/>
            <person name="Chapman J.C."/>
            <person name="Clark S.Y."/>
            <person name="Clarke G."/>
            <person name="Clee C."/>
            <person name="Cobley V."/>
            <person name="Collier R.E."/>
            <person name="Corby N."/>
            <person name="Coville G.J."/>
            <person name="Davies J."/>
            <person name="Deadman R."/>
            <person name="Dunn M."/>
            <person name="Earthrowl M."/>
            <person name="Ellington A.G."/>
            <person name="Errington H."/>
            <person name="Frankish A."/>
            <person name="Frankland J."/>
            <person name="French L."/>
            <person name="Garner P."/>
            <person name="Garnett J."/>
            <person name="Gay L."/>
            <person name="Ghori M.R.J."/>
            <person name="Gibson R."/>
            <person name="Gilby L.M."/>
            <person name="Gillett W."/>
            <person name="Glithero R.J."/>
            <person name="Grafham D.V."/>
            <person name="Griffiths C."/>
            <person name="Griffiths-Jones S."/>
            <person name="Grocock R."/>
            <person name="Hammond S."/>
            <person name="Harrison E.S.I."/>
            <person name="Hart E."/>
            <person name="Haugen E."/>
            <person name="Heath P.D."/>
            <person name="Holmes S."/>
            <person name="Holt K."/>
            <person name="Howden P.J."/>
            <person name="Hunt A.R."/>
            <person name="Hunt S.E."/>
            <person name="Hunter G."/>
            <person name="Isherwood J."/>
            <person name="James R."/>
            <person name="Johnson C."/>
            <person name="Johnson D."/>
            <person name="Joy A."/>
            <person name="Kay M."/>
            <person name="Kershaw J.K."/>
            <person name="Kibukawa M."/>
            <person name="Kimberley A.M."/>
            <person name="King A."/>
            <person name="Knights A.J."/>
            <person name="Lad H."/>
            <person name="Laird G."/>
            <person name="Lawlor S."/>
            <person name="Leongamornlert D.A."/>
            <person name="Lloyd D.M."/>
            <person name="Loveland J."/>
            <person name="Lovell J."/>
            <person name="Lush M.J."/>
            <person name="Lyne R."/>
            <person name="Martin S."/>
            <person name="Mashreghi-Mohammadi M."/>
            <person name="Matthews L."/>
            <person name="Matthews N.S.W."/>
            <person name="McLaren S."/>
            <person name="Milne S."/>
            <person name="Mistry S."/>
            <person name="Moore M.J.F."/>
            <person name="Nickerson T."/>
            <person name="O'Dell C.N."/>
            <person name="Oliver K."/>
            <person name="Palmeiri A."/>
            <person name="Palmer S.A."/>
            <person name="Parker A."/>
            <person name="Patel D."/>
            <person name="Pearce A.V."/>
            <person name="Peck A.I."/>
            <person name="Pelan S."/>
            <person name="Phelps K."/>
            <person name="Phillimore B.J."/>
            <person name="Plumb R."/>
            <person name="Rajan J."/>
            <person name="Raymond C."/>
            <person name="Rouse G."/>
            <person name="Saenphimmachak C."/>
            <person name="Sehra H.K."/>
            <person name="Sheridan E."/>
            <person name="Shownkeen R."/>
            <person name="Sims S."/>
            <person name="Skuce C.D."/>
            <person name="Smith M."/>
            <person name="Steward C."/>
            <person name="Subramanian S."/>
            <person name="Sycamore N."/>
            <person name="Tracey A."/>
            <person name="Tromans A."/>
            <person name="Van Helmond Z."/>
            <person name="Wall M."/>
            <person name="Wallis J.M."/>
            <person name="White S."/>
            <person name="Whitehead S.L."/>
            <person name="Wilkinson J.E."/>
            <person name="Willey D.L."/>
            <person name="Williams H."/>
            <person name="Wilming L."/>
            <person name="Wray P.W."/>
            <person name="Wu Z."/>
            <person name="Coulson A."/>
            <person name="Vaudin M."/>
            <person name="Sulston J.E."/>
            <person name="Durbin R.M."/>
            <person name="Hubbard T."/>
            <person name="Wooster R."/>
            <person name="Dunham I."/>
            <person name="Carter N.P."/>
            <person name="McVean G."/>
            <person name="Ross M.T."/>
            <person name="Harrow J."/>
            <person name="Olson M.V."/>
            <person name="Beck S."/>
            <person name="Rogers J."/>
            <person name="Bentley D.R."/>
        </authorList>
    </citation>
    <scope>NUCLEOTIDE SEQUENCE [LARGE SCALE GENOMIC DNA]</scope>
</reference>
<reference key="4">
    <citation type="submission" date="2005-09" db="EMBL/GenBank/DDBJ databases">
        <authorList>
            <person name="Mural R.J."/>
            <person name="Istrail S."/>
            <person name="Sutton G.G."/>
            <person name="Florea L."/>
            <person name="Halpern A.L."/>
            <person name="Mobarry C.M."/>
            <person name="Lippert R."/>
            <person name="Walenz B."/>
            <person name="Shatkay H."/>
            <person name="Dew I."/>
            <person name="Miller J.R."/>
            <person name="Flanigan M.J."/>
            <person name="Edwards N.J."/>
            <person name="Bolanos R."/>
            <person name="Fasulo D."/>
            <person name="Halldorsson B.V."/>
            <person name="Hannenhalli S."/>
            <person name="Turner R."/>
            <person name="Yooseph S."/>
            <person name="Lu F."/>
            <person name="Nusskern D.R."/>
            <person name="Shue B.C."/>
            <person name="Zheng X.H."/>
            <person name="Zhong F."/>
            <person name="Delcher A.L."/>
            <person name="Huson D.H."/>
            <person name="Kravitz S.A."/>
            <person name="Mouchard L."/>
            <person name="Reinert K."/>
            <person name="Remington K.A."/>
            <person name="Clark A.G."/>
            <person name="Waterman M.S."/>
            <person name="Eichler E.E."/>
            <person name="Adams M.D."/>
            <person name="Hunkapiller M.W."/>
            <person name="Myers E.W."/>
            <person name="Venter J.C."/>
        </authorList>
    </citation>
    <scope>NUCLEOTIDE SEQUENCE [LARGE SCALE GENOMIC DNA]</scope>
</reference>
<reference key="5">
    <citation type="journal article" date="2004" name="Genome Res.">
        <title>The status, quality, and expansion of the NIH full-length cDNA project: the Mammalian Gene Collection (MGC).</title>
        <authorList>
            <consortium name="The MGC Project Team"/>
        </authorList>
    </citation>
    <scope>NUCLEOTIDE SEQUENCE [LARGE SCALE MRNA] (ISOFORM 1)</scope>
    <source>
        <tissue>Testis</tissue>
    </source>
</reference>
<reference key="6">
    <citation type="journal article" date="2001" name="Cancer Immun.">
        <title>Humoral immunity to human breast cancer: antigen definition and quantitative analysis of mRNA expression.</title>
        <authorList>
            <person name="Scanlan M.J."/>
            <person name="Gout I."/>
            <person name="Gordon C.M."/>
            <person name="Williamson B."/>
            <person name="Stockert E."/>
            <person name="Gure A.O."/>
            <person name="Jaeger D."/>
            <person name="Chen Y.-T."/>
            <person name="Mackay A."/>
            <person name="O'Hare M.J."/>
            <person name="Old L.J."/>
        </authorList>
    </citation>
    <scope>NUCLEOTIDE SEQUENCE [MRNA] OF 69-470 (ISOFORM 1)</scope>
    <source>
        <tissue>Mammary gland</tissue>
    </source>
</reference>
<reference key="7">
    <citation type="journal article" date="2007" name="Mol. Cell. Biol.">
        <title>A dynamic scaffold of pre-snoRNP factors facilitates human box C/D snoRNP assembly.</title>
        <authorList>
            <person name="McKeegan K.S."/>
            <person name="Debieux C.M."/>
            <person name="Boulon S."/>
            <person name="Bertrand E."/>
            <person name="Watkins N.J."/>
        </authorList>
    </citation>
    <scope>FUNCTION</scope>
    <scope>INTERACTION WITH FBL; SNU13; NOP58; NUFIP1; RUVBL1; RUVBL2 AND TAF9</scope>
</reference>
<reference key="8">
    <citation type="journal article" date="2008" name="Proc. Natl. Acad. Sci. U.S.A.">
        <title>A quantitative atlas of mitotic phosphorylation.</title>
        <authorList>
            <person name="Dephoure N."/>
            <person name="Zhou C."/>
            <person name="Villen J."/>
            <person name="Beausoleil S.A."/>
            <person name="Bakalarski C.E."/>
            <person name="Elledge S.J."/>
            <person name="Gygi S.P."/>
        </authorList>
    </citation>
    <scope>PHOSPHORYLATION [LARGE SCALE ANALYSIS] AT SER-25</scope>
    <scope>IDENTIFICATION BY MASS SPECTROMETRY [LARGE SCALE ANALYSIS]</scope>
    <source>
        <tissue>Cervix carcinoma</tissue>
    </source>
</reference>
<reference key="9">
    <citation type="journal article" date="2013" name="J. Proteome Res.">
        <title>Toward a comprehensive characterization of a human cancer cell phosphoproteome.</title>
        <authorList>
            <person name="Zhou H."/>
            <person name="Di Palma S."/>
            <person name="Preisinger C."/>
            <person name="Peng M."/>
            <person name="Polat A.N."/>
            <person name="Heck A.J."/>
            <person name="Mohammed S."/>
        </authorList>
    </citation>
    <scope>PHOSPHORYLATION [LARGE SCALE ANALYSIS] AT SER-25</scope>
    <scope>IDENTIFICATION BY MASS SPECTROMETRY [LARGE SCALE ANALYSIS]</scope>
    <source>
        <tissue>Cervix carcinoma</tissue>
        <tissue>Erythroleukemia</tissue>
    </source>
</reference>
<reference key="10">
    <citation type="journal article" date="2014" name="J. Proteomics">
        <title>An enzyme assisted RP-RPLC approach for in-depth analysis of human liver phosphoproteome.</title>
        <authorList>
            <person name="Bian Y."/>
            <person name="Song C."/>
            <person name="Cheng K."/>
            <person name="Dong M."/>
            <person name="Wang F."/>
            <person name="Huang J."/>
            <person name="Sun D."/>
            <person name="Wang L."/>
            <person name="Ye M."/>
            <person name="Zou H."/>
        </authorList>
    </citation>
    <scope>PHOSPHORYLATION [LARGE SCALE ANALYSIS] AT SER-25</scope>
    <scope>IDENTIFICATION BY MASS SPECTROMETRY [LARGE SCALE ANALYSIS]</scope>
    <source>
        <tissue>Liver</tissue>
    </source>
</reference>
<reference key="11">
    <citation type="journal article" date="2014" name="Nat. Struct. Mol. Biol.">
        <title>Uncovering global SUMOylation signaling networks in a site-specific manner.</title>
        <authorList>
            <person name="Hendriks I.A."/>
            <person name="D'Souza R.C."/>
            <person name="Yang B."/>
            <person name="Verlaan-de Vries M."/>
            <person name="Mann M."/>
            <person name="Vertegaal A.C."/>
        </authorList>
    </citation>
    <scope>SUMOYLATION [LARGE SCALE ANALYSIS] AT LYS-143; LYS-162; LYS-200 AND LYS-459</scope>
    <scope>IDENTIFICATION BY MASS SPECTROMETRY [LARGE SCALE ANALYSIS]</scope>
</reference>
<reference key="12">
    <citation type="journal article" date="2015" name="Mol. Cell. Proteomics">
        <title>System-wide analysis of SUMOylation dynamics in response to replication stress reveals novel small ubiquitin-like modified target proteins and acceptor lysines relevant for genome stability.</title>
        <authorList>
            <person name="Xiao Z."/>
            <person name="Chang J.G."/>
            <person name="Hendriks I.A."/>
            <person name="Sigurdsson J.O."/>
            <person name="Olsen J.V."/>
            <person name="Vertegaal A.C."/>
        </authorList>
    </citation>
    <scope>SUMOYLATION [LARGE SCALE ANALYSIS] AT LYS-138 AND LYS-200</scope>
    <scope>IDENTIFICATION BY MASS SPECTROMETRY [LARGE SCALE ANALYSIS]</scope>
</reference>
<reference key="13">
    <citation type="journal article" date="2017" name="Nat. Commun.">
        <title>R2TP/Prefoldin-like component RUVBL1/RUVBL2 directly interacts with ZNHIT2 to regulate assembly of U5 small nuclear ribonucleoprotein.</title>
        <authorList>
            <person name="Cloutier P."/>
            <person name="Poitras C."/>
            <person name="Durand M."/>
            <person name="Hekmat O."/>
            <person name="Fiola-Masson E."/>
            <person name="Bouchard A."/>
            <person name="Faubert D."/>
            <person name="Chabot B."/>
            <person name="Coulombe B."/>
        </authorList>
    </citation>
    <scope>INTERACTION WITH RUVBL1/RUVBL2 COMPLEX</scope>
</reference>
<reference key="14">
    <citation type="journal article" date="2017" name="Nat. Struct. Mol. Biol.">
        <title>Site-specific mapping of the human SUMO proteome reveals co-modification with phosphorylation.</title>
        <authorList>
            <person name="Hendriks I.A."/>
            <person name="Lyon D."/>
            <person name="Young C."/>
            <person name="Jensen L.J."/>
            <person name="Vertegaal A.C."/>
            <person name="Nielsen M.L."/>
        </authorList>
    </citation>
    <scope>SUMOYLATION [LARGE SCALE ANALYSIS] AT LYS-79; LYS-108; LYS-118; LYS-138; LYS-143; LYS-153; LYS-162; LYS-173; LYS-183; LYS-200 AND LYS-459</scope>
    <scope>IDENTIFICATION BY MASS SPECTROMETRY [LARGE SCALE ANALYSIS]</scope>
</reference>
<reference key="15">
    <citation type="journal article" date="2006" name="Science">
        <title>The consensus coding sequences of human breast and colorectal cancers.</title>
        <authorList>
            <person name="Sjoeblom T."/>
            <person name="Jones S."/>
            <person name="Wood L.D."/>
            <person name="Parsons D.W."/>
            <person name="Lin J."/>
            <person name="Barber T.D."/>
            <person name="Mandelker D."/>
            <person name="Leary R.J."/>
            <person name="Ptak J."/>
            <person name="Silliman N."/>
            <person name="Szabo S."/>
            <person name="Buckhaults P."/>
            <person name="Farrell C."/>
            <person name="Meeh P."/>
            <person name="Markowitz S.D."/>
            <person name="Willis J."/>
            <person name="Dawson D."/>
            <person name="Willson J.K.V."/>
            <person name="Gazdar A.F."/>
            <person name="Hartigan J."/>
            <person name="Wu L."/>
            <person name="Liu C."/>
            <person name="Parmigiani G."/>
            <person name="Park B.H."/>
            <person name="Bachman K.E."/>
            <person name="Papadopoulos N."/>
            <person name="Vogelstein B."/>
            <person name="Kinzler K.W."/>
            <person name="Velculescu V.E."/>
        </authorList>
    </citation>
    <scope>VARIANT [LARGE SCALE ANALYSIS] HIS-455</scope>
</reference>
<gene>
    <name type="primary">ZNHIT6</name>
    <name type="synonym">BCD1</name>
    <name type="synonym">C1orf181</name>
</gene>